<accession>A5TZU6</accession>
<name>Y573_MYCTA</name>
<evidence type="ECO:0000255" key="1">
    <source>
        <dbReference type="HAMAP-Rule" id="MF_00632"/>
    </source>
</evidence>
<protein>
    <recommendedName>
        <fullName evidence="1">Nucleotide-binding protein MRA_0573</fullName>
    </recommendedName>
</protein>
<sequence length="163" mass="18078">MADSSFDIVSKVDRQEVDNALNQAAKELATRFDFRGTDTKIAWKGDEAVELTSSTEERVKAAVDVFKEKLIRRDISLKAFEAGEPQASGKTYKVTGALKQGISSENAKKITKLIRDAGPKNVKTQIQGDEVRVTSKKRDDLQAVIAMLKKADLDVALQFVNYR</sequence>
<comment type="function">
    <text evidence="1">Nucleotide-binding protein.</text>
</comment>
<comment type="similarity">
    <text evidence="1">Belongs to the YajQ family.</text>
</comment>
<proteinExistence type="inferred from homology"/>
<reference key="1">
    <citation type="journal article" date="2008" name="PLoS ONE">
        <title>Genetic basis of virulence attenuation revealed by comparative genomic analysis of Mycobacterium tuberculosis strain H37Ra versus H37Rv.</title>
        <authorList>
            <person name="Zheng H."/>
            <person name="Lu L."/>
            <person name="Wang B."/>
            <person name="Pu S."/>
            <person name="Zhang X."/>
            <person name="Zhu G."/>
            <person name="Shi W."/>
            <person name="Zhang L."/>
            <person name="Wang H."/>
            <person name="Wang S."/>
            <person name="Zhao G."/>
            <person name="Zhang Y."/>
        </authorList>
    </citation>
    <scope>NUCLEOTIDE SEQUENCE [LARGE SCALE GENOMIC DNA]</scope>
    <source>
        <strain>ATCC 25177 / H37Ra</strain>
    </source>
</reference>
<keyword id="KW-0547">Nucleotide-binding</keyword>
<keyword id="KW-1185">Reference proteome</keyword>
<dbReference type="EMBL" id="CP000611">
    <property type="protein sequence ID" value="ABQ72296.1"/>
    <property type="molecule type" value="Genomic_DNA"/>
</dbReference>
<dbReference type="RefSeq" id="WP_003402987.1">
    <property type="nucleotide sequence ID" value="NZ_CP016972.1"/>
</dbReference>
<dbReference type="SMR" id="A5TZU6"/>
<dbReference type="KEGG" id="mra:MRA_0573"/>
<dbReference type="eggNOG" id="COG1666">
    <property type="taxonomic scope" value="Bacteria"/>
</dbReference>
<dbReference type="HOGENOM" id="CLU_099839_0_0_11"/>
<dbReference type="Proteomes" id="UP000001988">
    <property type="component" value="Chromosome"/>
</dbReference>
<dbReference type="GO" id="GO:0005829">
    <property type="term" value="C:cytosol"/>
    <property type="evidence" value="ECO:0007669"/>
    <property type="project" value="TreeGrafter"/>
</dbReference>
<dbReference type="GO" id="GO:0000166">
    <property type="term" value="F:nucleotide binding"/>
    <property type="evidence" value="ECO:0007669"/>
    <property type="project" value="TreeGrafter"/>
</dbReference>
<dbReference type="CDD" id="cd11740">
    <property type="entry name" value="YajQ_like"/>
    <property type="match status" value="1"/>
</dbReference>
<dbReference type="FunFam" id="3.30.70.860:FF:000004">
    <property type="entry name" value="UPF0234 protein AWC22_11905"/>
    <property type="match status" value="1"/>
</dbReference>
<dbReference type="FunFam" id="3.30.70.990:FF:000003">
    <property type="entry name" value="UPF0234 protein MIP_06774"/>
    <property type="match status" value="1"/>
</dbReference>
<dbReference type="Gene3D" id="3.30.70.860">
    <property type="match status" value="1"/>
</dbReference>
<dbReference type="Gene3D" id="3.30.70.990">
    <property type="entry name" value="YajQ-like, domain 2"/>
    <property type="match status" value="1"/>
</dbReference>
<dbReference type="HAMAP" id="MF_00632">
    <property type="entry name" value="YajQ"/>
    <property type="match status" value="1"/>
</dbReference>
<dbReference type="InterPro" id="IPR007551">
    <property type="entry name" value="DUF520"/>
</dbReference>
<dbReference type="InterPro" id="IPR035571">
    <property type="entry name" value="UPF0234-like_C"/>
</dbReference>
<dbReference type="InterPro" id="IPR035570">
    <property type="entry name" value="UPF0234_N"/>
</dbReference>
<dbReference type="InterPro" id="IPR036183">
    <property type="entry name" value="YajQ-like_sf"/>
</dbReference>
<dbReference type="NCBIfam" id="NF003819">
    <property type="entry name" value="PRK05412.1"/>
    <property type="match status" value="1"/>
</dbReference>
<dbReference type="PANTHER" id="PTHR30476">
    <property type="entry name" value="UPF0234 PROTEIN YAJQ"/>
    <property type="match status" value="1"/>
</dbReference>
<dbReference type="PANTHER" id="PTHR30476:SF0">
    <property type="entry name" value="UPF0234 PROTEIN YAJQ"/>
    <property type="match status" value="1"/>
</dbReference>
<dbReference type="Pfam" id="PF04461">
    <property type="entry name" value="DUF520"/>
    <property type="match status" value="1"/>
</dbReference>
<dbReference type="SUPFAM" id="SSF89963">
    <property type="entry name" value="YajQ-like"/>
    <property type="match status" value="2"/>
</dbReference>
<organism>
    <name type="scientific">Mycobacterium tuberculosis (strain ATCC 25177 / H37Ra)</name>
    <dbReference type="NCBI Taxonomy" id="419947"/>
    <lineage>
        <taxon>Bacteria</taxon>
        <taxon>Bacillati</taxon>
        <taxon>Actinomycetota</taxon>
        <taxon>Actinomycetes</taxon>
        <taxon>Mycobacteriales</taxon>
        <taxon>Mycobacteriaceae</taxon>
        <taxon>Mycobacterium</taxon>
        <taxon>Mycobacterium tuberculosis complex</taxon>
    </lineage>
</organism>
<feature type="chain" id="PRO_1000051742" description="Nucleotide-binding protein MRA_0573">
    <location>
        <begin position="1"/>
        <end position="163"/>
    </location>
</feature>
<gene>
    <name type="ordered locus">MRA_0573</name>
</gene>